<proteinExistence type="inferred from homology"/>
<feature type="chain" id="PRO_1000211824" description="Small ribosomal subunit protein uS19">
    <location>
        <begin position="1"/>
        <end position="92"/>
    </location>
</feature>
<gene>
    <name evidence="1" type="primary">rpsS</name>
    <name type="ordered locus">Vapar_4909</name>
</gene>
<protein>
    <recommendedName>
        <fullName evidence="1">Small ribosomal subunit protein uS19</fullName>
    </recommendedName>
    <alternativeName>
        <fullName evidence="2">30S ribosomal protein S19</fullName>
    </alternativeName>
</protein>
<sequence length="92" mass="10400">MTRSLKKGPFVDHHLVAKADKAVTTKDKKPIKTWSRRSMVLPEFIGLTIAVHNGKQHVPVYITDQMVGHKLGEFALTRTFKGHPADKKVQKK</sequence>
<reference key="1">
    <citation type="journal article" date="2011" name="J. Bacteriol.">
        <title>Complete genome sequence of the metabolically versatile plant growth-promoting endophyte, Variovorax paradoxus S110.</title>
        <authorList>
            <person name="Han J.I."/>
            <person name="Choi H.K."/>
            <person name="Lee S.W."/>
            <person name="Orwin P.M."/>
            <person name="Kim J."/>
            <person name="Laroe S.L."/>
            <person name="Kim T.G."/>
            <person name="O'Neil J."/>
            <person name="Leadbetter J.R."/>
            <person name="Lee S.Y."/>
            <person name="Hur C.G."/>
            <person name="Spain J.C."/>
            <person name="Ovchinnikova G."/>
            <person name="Goodwin L."/>
            <person name="Han C."/>
        </authorList>
    </citation>
    <scope>NUCLEOTIDE SEQUENCE [LARGE SCALE GENOMIC DNA]</scope>
    <source>
        <strain>S110</strain>
    </source>
</reference>
<accession>C5CP49</accession>
<dbReference type="EMBL" id="CP001635">
    <property type="protein sequence ID" value="ACS21513.1"/>
    <property type="molecule type" value="Genomic_DNA"/>
</dbReference>
<dbReference type="SMR" id="C5CP49"/>
<dbReference type="STRING" id="543728.Vapar_4909"/>
<dbReference type="KEGG" id="vap:Vapar_4909"/>
<dbReference type="eggNOG" id="COG0185">
    <property type="taxonomic scope" value="Bacteria"/>
</dbReference>
<dbReference type="HOGENOM" id="CLU_144911_0_1_4"/>
<dbReference type="OrthoDB" id="9797833at2"/>
<dbReference type="GO" id="GO:0005737">
    <property type="term" value="C:cytoplasm"/>
    <property type="evidence" value="ECO:0007669"/>
    <property type="project" value="UniProtKB-ARBA"/>
</dbReference>
<dbReference type="GO" id="GO:0015935">
    <property type="term" value="C:small ribosomal subunit"/>
    <property type="evidence" value="ECO:0007669"/>
    <property type="project" value="InterPro"/>
</dbReference>
<dbReference type="GO" id="GO:0019843">
    <property type="term" value="F:rRNA binding"/>
    <property type="evidence" value="ECO:0007669"/>
    <property type="project" value="UniProtKB-UniRule"/>
</dbReference>
<dbReference type="GO" id="GO:0003735">
    <property type="term" value="F:structural constituent of ribosome"/>
    <property type="evidence" value="ECO:0007669"/>
    <property type="project" value="InterPro"/>
</dbReference>
<dbReference type="GO" id="GO:0000028">
    <property type="term" value="P:ribosomal small subunit assembly"/>
    <property type="evidence" value="ECO:0007669"/>
    <property type="project" value="TreeGrafter"/>
</dbReference>
<dbReference type="GO" id="GO:0006412">
    <property type="term" value="P:translation"/>
    <property type="evidence" value="ECO:0007669"/>
    <property type="project" value="UniProtKB-UniRule"/>
</dbReference>
<dbReference type="FunFam" id="3.30.860.10:FF:000001">
    <property type="entry name" value="30S ribosomal protein S19"/>
    <property type="match status" value="1"/>
</dbReference>
<dbReference type="Gene3D" id="3.30.860.10">
    <property type="entry name" value="30s Ribosomal Protein S19, Chain A"/>
    <property type="match status" value="1"/>
</dbReference>
<dbReference type="HAMAP" id="MF_00531">
    <property type="entry name" value="Ribosomal_uS19"/>
    <property type="match status" value="1"/>
</dbReference>
<dbReference type="InterPro" id="IPR002222">
    <property type="entry name" value="Ribosomal_uS19"/>
</dbReference>
<dbReference type="InterPro" id="IPR005732">
    <property type="entry name" value="Ribosomal_uS19_bac-type"/>
</dbReference>
<dbReference type="InterPro" id="IPR020934">
    <property type="entry name" value="Ribosomal_uS19_CS"/>
</dbReference>
<dbReference type="InterPro" id="IPR023575">
    <property type="entry name" value="Ribosomal_uS19_SF"/>
</dbReference>
<dbReference type="NCBIfam" id="TIGR01050">
    <property type="entry name" value="rpsS_bact"/>
    <property type="match status" value="1"/>
</dbReference>
<dbReference type="PANTHER" id="PTHR11880">
    <property type="entry name" value="RIBOSOMAL PROTEIN S19P FAMILY MEMBER"/>
    <property type="match status" value="1"/>
</dbReference>
<dbReference type="PANTHER" id="PTHR11880:SF8">
    <property type="entry name" value="SMALL RIBOSOMAL SUBUNIT PROTEIN US19M"/>
    <property type="match status" value="1"/>
</dbReference>
<dbReference type="Pfam" id="PF00203">
    <property type="entry name" value="Ribosomal_S19"/>
    <property type="match status" value="1"/>
</dbReference>
<dbReference type="PIRSF" id="PIRSF002144">
    <property type="entry name" value="Ribosomal_S19"/>
    <property type="match status" value="1"/>
</dbReference>
<dbReference type="PRINTS" id="PR00975">
    <property type="entry name" value="RIBOSOMALS19"/>
</dbReference>
<dbReference type="SUPFAM" id="SSF54570">
    <property type="entry name" value="Ribosomal protein S19"/>
    <property type="match status" value="1"/>
</dbReference>
<dbReference type="PROSITE" id="PS00323">
    <property type="entry name" value="RIBOSOMAL_S19"/>
    <property type="match status" value="1"/>
</dbReference>
<keyword id="KW-0687">Ribonucleoprotein</keyword>
<keyword id="KW-0689">Ribosomal protein</keyword>
<keyword id="KW-0694">RNA-binding</keyword>
<keyword id="KW-0699">rRNA-binding</keyword>
<evidence type="ECO:0000255" key="1">
    <source>
        <dbReference type="HAMAP-Rule" id="MF_00531"/>
    </source>
</evidence>
<evidence type="ECO:0000305" key="2"/>
<name>RS19_VARPS</name>
<organism>
    <name type="scientific">Variovorax paradoxus (strain S110)</name>
    <dbReference type="NCBI Taxonomy" id="543728"/>
    <lineage>
        <taxon>Bacteria</taxon>
        <taxon>Pseudomonadati</taxon>
        <taxon>Pseudomonadota</taxon>
        <taxon>Betaproteobacteria</taxon>
        <taxon>Burkholderiales</taxon>
        <taxon>Comamonadaceae</taxon>
        <taxon>Variovorax</taxon>
    </lineage>
</organism>
<comment type="function">
    <text evidence="1">Protein S19 forms a complex with S13 that binds strongly to the 16S ribosomal RNA.</text>
</comment>
<comment type="similarity">
    <text evidence="1">Belongs to the universal ribosomal protein uS19 family.</text>
</comment>